<organism>
    <name type="scientific">Candida albicans (strain SC5314 / ATCC MYA-2876)</name>
    <name type="common">Yeast</name>
    <dbReference type="NCBI Taxonomy" id="237561"/>
    <lineage>
        <taxon>Eukaryota</taxon>
        <taxon>Fungi</taxon>
        <taxon>Dikarya</taxon>
        <taxon>Ascomycota</taxon>
        <taxon>Saccharomycotina</taxon>
        <taxon>Pichiomycetes</taxon>
        <taxon>Debaryomycetaceae</taxon>
        <taxon>Candida/Lodderomyces clade</taxon>
        <taxon>Candida</taxon>
    </lineage>
</organism>
<gene>
    <name type="primary">CDC37</name>
    <name type="ordered locus">CAALFM_C602610CA</name>
    <name type="ORF">CaO19.5531</name>
</gene>
<comment type="function">
    <text evidence="1">Co-chaperone that binds to numerous kinases and promotes their interaction with the Hsp90 complex, resulting in stabilization and promotion of their activity.</text>
</comment>
<comment type="subunit">
    <text>Forms a complex with Hsp90. Interacts with a number of kinases such as crk1.</text>
</comment>
<comment type="subcellular location">
    <subcellularLocation>
        <location evidence="1">Cytoplasm</location>
    </subcellularLocation>
</comment>
<comment type="similarity">
    <text evidence="3">Belongs to the CDC37 family.</text>
</comment>
<evidence type="ECO:0000250" key="1"/>
<evidence type="ECO:0000256" key="2">
    <source>
        <dbReference type="SAM" id="MobiDB-lite"/>
    </source>
</evidence>
<evidence type="ECO:0000305" key="3"/>
<accession>Q8X1E6</accession>
<accession>A0A1D8PPZ3</accession>
<accession>Q5AC19</accession>
<sequence>MPIDYSKWDKIEISDDSDVEVHPNVDKQSFIRWKQRDIHEKRMQRNIEIKSILIQLTMYAKLNERVDYLLEKLTSTELLDSEKVMSKLNSEFDPQEKFDYDKLIKDKGSTLRKGLKDLKFDREEIENTPCYNEMIEDLFVQIKDDHPETKTDGDKLIEYLKEHRNRIDDVLSKQTIKLDDLLYQKAQLIVSDDLHTGFDRSFLNKDKPEEKEENQDKPKAPEAKKTTVTTTETINSPKPVEENTDKEILDELEILPATKEFAKIPSDNLSKAAEFLIKHPSICTEQQKDALIMTAFDLQLENKSDEAKHIVHQSLLLQYVGQLSDNGKAAPANVINAIKLFFSKIAAESSPAKHAFLEDVNQTFNHIKGRCEIIKEEQKQNAANKEGTGEEEEEEALIQLKALDDNTELSVNIPQEGTKEYEIFTTKLPIEFQNAIKTESIDEVNKEFAKLKIEDAERILEIFNECGVIGISGYIEDEKEFEELKKEYAHETANQEEDQSASVEDTVD</sequence>
<feature type="chain" id="PRO_0000195065" description="Hsp90 co-chaperone Cdc37">
    <location>
        <begin position="1"/>
        <end position="508"/>
    </location>
</feature>
<feature type="region of interest" description="Disordered" evidence="2">
    <location>
        <begin position="201"/>
        <end position="245"/>
    </location>
</feature>
<feature type="region of interest" description="Disordered" evidence="2">
    <location>
        <begin position="488"/>
        <end position="508"/>
    </location>
</feature>
<feature type="compositionally biased region" description="Basic and acidic residues" evidence="2">
    <location>
        <begin position="201"/>
        <end position="225"/>
    </location>
</feature>
<feature type="compositionally biased region" description="Acidic residues" evidence="2">
    <location>
        <begin position="494"/>
        <end position="508"/>
    </location>
</feature>
<reference key="1">
    <citation type="submission" date="2001-07" db="EMBL/GenBank/DDBJ databases">
        <title>A Cdc37 homolog in Candida albicans interacting with Crk1 kinase domain.</title>
        <authorList>
            <person name="Ni J."/>
            <person name="Chen J."/>
        </authorList>
    </citation>
    <scope>NUCLEOTIDE SEQUENCE [GENOMIC DNA]</scope>
    <source>
        <strain>SC5314 / ATCC MYA-2876</strain>
    </source>
</reference>
<reference key="2">
    <citation type="journal article" date="2004" name="Proc. Natl. Acad. Sci. U.S.A.">
        <title>The diploid genome sequence of Candida albicans.</title>
        <authorList>
            <person name="Jones T."/>
            <person name="Federspiel N.A."/>
            <person name="Chibana H."/>
            <person name="Dungan J."/>
            <person name="Kalman S."/>
            <person name="Magee B.B."/>
            <person name="Newport G."/>
            <person name="Thorstenson Y.R."/>
            <person name="Agabian N."/>
            <person name="Magee P.T."/>
            <person name="Davis R.W."/>
            <person name="Scherer S."/>
        </authorList>
    </citation>
    <scope>NUCLEOTIDE SEQUENCE [LARGE SCALE GENOMIC DNA]</scope>
    <source>
        <strain>SC5314 / ATCC MYA-2876</strain>
    </source>
</reference>
<reference key="3">
    <citation type="journal article" date="2007" name="Genome Biol.">
        <title>Assembly of the Candida albicans genome into sixteen supercontigs aligned on the eight chromosomes.</title>
        <authorList>
            <person name="van het Hoog M."/>
            <person name="Rast T.J."/>
            <person name="Martchenko M."/>
            <person name="Grindle S."/>
            <person name="Dignard D."/>
            <person name="Hogues H."/>
            <person name="Cuomo C."/>
            <person name="Berriman M."/>
            <person name="Scherer S."/>
            <person name="Magee B.B."/>
            <person name="Whiteway M."/>
            <person name="Chibana H."/>
            <person name="Nantel A."/>
            <person name="Magee P.T."/>
        </authorList>
    </citation>
    <scope>GENOME REANNOTATION</scope>
    <source>
        <strain>SC5314 / ATCC MYA-2876</strain>
    </source>
</reference>
<reference key="4">
    <citation type="journal article" date="2013" name="Genome Biol.">
        <title>Assembly of a phased diploid Candida albicans genome facilitates allele-specific measurements and provides a simple model for repeat and indel structure.</title>
        <authorList>
            <person name="Muzzey D."/>
            <person name="Schwartz K."/>
            <person name="Weissman J.S."/>
            <person name="Sherlock G."/>
        </authorList>
    </citation>
    <scope>NUCLEOTIDE SEQUENCE [LARGE SCALE GENOMIC DNA]</scope>
    <scope>GENOME REANNOTATION</scope>
    <source>
        <strain>SC5314 / ATCC MYA-2876</strain>
    </source>
</reference>
<keyword id="KW-0131">Cell cycle</keyword>
<keyword id="KW-0132">Cell division</keyword>
<keyword id="KW-0143">Chaperone</keyword>
<keyword id="KW-0963">Cytoplasm</keyword>
<keyword id="KW-1185">Reference proteome</keyword>
<proteinExistence type="inferred from homology"/>
<name>CDC37_CANAL</name>
<protein>
    <recommendedName>
        <fullName>Hsp90 co-chaperone Cdc37</fullName>
    </recommendedName>
    <alternativeName>
        <fullName>Cell division control protein 37</fullName>
    </alternativeName>
    <alternativeName>
        <fullName>Hsp90 chaperone protein kinase-targeting subunit</fullName>
    </alternativeName>
</protein>
<dbReference type="EMBL" id="AF397024">
    <property type="protein sequence ID" value="AAL56555.1"/>
    <property type="molecule type" value="Genomic_DNA"/>
</dbReference>
<dbReference type="EMBL" id="CP017628">
    <property type="protein sequence ID" value="AOW30194.1"/>
    <property type="molecule type" value="Genomic_DNA"/>
</dbReference>
<dbReference type="RefSeq" id="XP_719095.1">
    <property type="nucleotide sequence ID" value="XM_714002.1"/>
</dbReference>
<dbReference type="SMR" id="Q8X1E6"/>
<dbReference type="FunCoup" id="Q8X1E6">
    <property type="interactions" value="462"/>
</dbReference>
<dbReference type="IntAct" id="Q8X1E6">
    <property type="interactions" value="2"/>
</dbReference>
<dbReference type="MINT" id="Q8X1E6"/>
<dbReference type="STRING" id="237561.Q8X1E6"/>
<dbReference type="EnsemblFungi" id="C6_02610C_A-T">
    <property type="protein sequence ID" value="C6_02610C_A-T-p1"/>
    <property type="gene ID" value="C6_02610C_A"/>
</dbReference>
<dbReference type="GeneID" id="3639210"/>
<dbReference type="KEGG" id="cal:CAALFM_C602610CA"/>
<dbReference type="CGD" id="CAL0000192456">
    <property type="gene designation" value="CDC37"/>
</dbReference>
<dbReference type="VEuPathDB" id="FungiDB:C6_02610C_A"/>
<dbReference type="eggNOG" id="KOG2260">
    <property type="taxonomic scope" value="Eukaryota"/>
</dbReference>
<dbReference type="HOGENOM" id="CLU_033261_1_0_1"/>
<dbReference type="InParanoid" id="Q8X1E6"/>
<dbReference type="OrthoDB" id="440202at2759"/>
<dbReference type="Proteomes" id="UP000000559">
    <property type="component" value="Chromosome 6"/>
</dbReference>
<dbReference type="GO" id="GO:0005737">
    <property type="term" value="C:cytoplasm"/>
    <property type="evidence" value="ECO:0000318"/>
    <property type="project" value="GO_Central"/>
</dbReference>
<dbReference type="GO" id="GO:0005634">
    <property type="term" value="C:nucleus"/>
    <property type="evidence" value="ECO:0007669"/>
    <property type="project" value="EnsemblFungi"/>
</dbReference>
<dbReference type="GO" id="GO:0031072">
    <property type="term" value="F:heat shock protein binding"/>
    <property type="evidence" value="ECO:0000318"/>
    <property type="project" value="GO_Central"/>
</dbReference>
<dbReference type="GO" id="GO:0019901">
    <property type="term" value="F:protein kinase binding"/>
    <property type="evidence" value="ECO:0007669"/>
    <property type="project" value="InterPro"/>
</dbReference>
<dbReference type="GO" id="GO:0051087">
    <property type="term" value="F:protein-folding chaperone binding"/>
    <property type="evidence" value="ECO:0000318"/>
    <property type="project" value="GO_Central"/>
</dbReference>
<dbReference type="GO" id="GO:0051082">
    <property type="term" value="F:unfolded protein binding"/>
    <property type="evidence" value="ECO:0000316"/>
    <property type="project" value="CGD"/>
</dbReference>
<dbReference type="GO" id="GO:0051301">
    <property type="term" value="P:cell division"/>
    <property type="evidence" value="ECO:0007669"/>
    <property type="project" value="UniProtKB-KW"/>
</dbReference>
<dbReference type="GO" id="GO:0071474">
    <property type="term" value="P:cellular hyperosmotic response"/>
    <property type="evidence" value="ECO:0007669"/>
    <property type="project" value="EnsemblFungi"/>
</dbReference>
<dbReference type="GO" id="GO:0071852">
    <property type="term" value="P:fungal-type cell wall organization or biogenesis"/>
    <property type="evidence" value="ECO:0007669"/>
    <property type="project" value="EnsemblFungi"/>
</dbReference>
<dbReference type="GO" id="GO:0038066">
    <property type="term" value="P:p38MAPK cascade"/>
    <property type="evidence" value="ECO:0007669"/>
    <property type="project" value="EnsemblFungi"/>
</dbReference>
<dbReference type="GO" id="GO:0043410">
    <property type="term" value="P:positive regulation of MAPK cascade"/>
    <property type="evidence" value="ECO:0007669"/>
    <property type="project" value="EnsemblFungi"/>
</dbReference>
<dbReference type="GO" id="GO:0006457">
    <property type="term" value="P:protein folding"/>
    <property type="evidence" value="ECO:0000318"/>
    <property type="project" value="GO_Central"/>
</dbReference>
<dbReference type="GO" id="GO:0050821">
    <property type="term" value="P:protein stabilization"/>
    <property type="evidence" value="ECO:0000318"/>
    <property type="project" value="GO_Central"/>
</dbReference>
<dbReference type="GO" id="GO:0051726">
    <property type="term" value="P:regulation of cell cycle"/>
    <property type="evidence" value="ECO:0007669"/>
    <property type="project" value="EnsemblFungi"/>
</dbReference>
<dbReference type="GO" id="GO:0030474">
    <property type="term" value="P:spindle pole body duplication"/>
    <property type="evidence" value="ECO:0007669"/>
    <property type="project" value="EnsemblFungi"/>
</dbReference>
<dbReference type="Gene3D" id="1.20.58.610">
    <property type="entry name" value="Cdc37, Hsp90 binding domain"/>
    <property type="match status" value="1"/>
</dbReference>
<dbReference type="InterPro" id="IPR004918">
    <property type="entry name" value="Cdc37"/>
</dbReference>
<dbReference type="InterPro" id="IPR013873">
    <property type="entry name" value="Cdc37_C"/>
</dbReference>
<dbReference type="InterPro" id="IPR013874">
    <property type="entry name" value="Cdc37_Hsp90-bd"/>
</dbReference>
<dbReference type="InterPro" id="IPR038189">
    <property type="entry name" value="Cdc37_Hsp90-bd_sf"/>
</dbReference>
<dbReference type="InterPro" id="IPR013855">
    <property type="entry name" value="Cdc37_N_dom"/>
</dbReference>
<dbReference type="PANTHER" id="PTHR12800">
    <property type="entry name" value="CDC37-RELATED"/>
    <property type="match status" value="1"/>
</dbReference>
<dbReference type="PANTHER" id="PTHR12800:SF4">
    <property type="entry name" value="HSP90 CO-CHAPERONE CDC37"/>
    <property type="match status" value="1"/>
</dbReference>
<dbReference type="Pfam" id="PF08564">
    <property type="entry name" value="CDC37_C"/>
    <property type="match status" value="1"/>
</dbReference>
<dbReference type="Pfam" id="PF08565">
    <property type="entry name" value="CDC37_M"/>
    <property type="match status" value="1"/>
</dbReference>
<dbReference type="Pfam" id="PF03234">
    <property type="entry name" value="CDC37_N"/>
    <property type="match status" value="1"/>
</dbReference>
<dbReference type="SMART" id="SM01069">
    <property type="entry name" value="CDC37_C"/>
    <property type="match status" value="1"/>
</dbReference>
<dbReference type="SMART" id="SM01070">
    <property type="entry name" value="CDC37_M"/>
    <property type="match status" value="1"/>
</dbReference>
<dbReference type="SMART" id="SM01071">
    <property type="entry name" value="CDC37_N"/>
    <property type="match status" value="1"/>
</dbReference>
<dbReference type="SUPFAM" id="SSF101391">
    <property type="entry name" value="Hsp90 co-chaperone CDC37"/>
    <property type="match status" value="1"/>
</dbReference>